<gene>
    <name type="primary">EXPB11</name>
    <name type="ordered locus">Os02g0658800</name>
    <name type="ordered locus">LOC_Os02g44108</name>
    <name type="ORF">OJ1112_F09.30</name>
    <name type="ORF">P0708H12.9</name>
</gene>
<sequence length="292" mass="30500">MAKSCTLVLLLVALVGLSLLVSPIACSRKLSKPKPKPKPSMKKPVVRAHNNYTGSPSVTVTTGWAAAGATYYGAPNGDGSDGGACGYQTAVGQRPFSSMIAAGSPSLYKGGKGCGACYEVKCTTNAACSGQPATVVITDECPGGICLAGAAHFDMSGTSMGAMAKPGMADKLRAAGILQVQYRRVPCKYSGVNIAFRVDQGANPFYFEVLIEFEDGDGDLNAVDLMEAGCGWTPMVQNWGALWRYNSNTGKALKAPFSLRLTSDSGKVLVANNVIPASWKPGVTYRSLVNYS</sequence>
<reference key="1">
    <citation type="journal article" date="2001" name="Plant Physiol.">
        <title>Expression of beta-expansins is correlated with internodal elongation in deepwater rice.</title>
        <authorList>
            <person name="Lee Y."/>
            <person name="Kende H."/>
        </authorList>
    </citation>
    <scope>NUCLEOTIDE SEQUENCE [GENOMIC DNA / MRNA]</scope>
    <scope>TISSUE SPECIFICITY</scope>
    <scope>INDUCTION</scope>
</reference>
<reference key="2">
    <citation type="journal article" date="2005" name="Nature">
        <title>The map-based sequence of the rice genome.</title>
        <authorList>
            <consortium name="International rice genome sequencing project (IRGSP)"/>
        </authorList>
    </citation>
    <scope>NUCLEOTIDE SEQUENCE [LARGE SCALE GENOMIC DNA]</scope>
    <source>
        <strain>cv. Nipponbare</strain>
    </source>
</reference>
<reference key="3">
    <citation type="journal article" date="2008" name="Nucleic Acids Res.">
        <title>The rice annotation project database (RAP-DB): 2008 update.</title>
        <authorList>
            <consortium name="The rice annotation project (RAP)"/>
        </authorList>
    </citation>
    <scope>GENOME REANNOTATION</scope>
    <source>
        <strain>cv. Nipponbare</strain>
    </source>
</reference>
<reference key="4">
    <citation type="journal article" date="2013" name="Rice">
        <title>Improvement of the Oryza sativa Nipponbare reference genome using next generation sequence and optical map data.</title>
        <authorList>
            <person name="Kawahara Y."/>
            <person name="de la Bastide M."/>
            <person name="Hamilton J.P."/>
            <person name="Kanamori H."/>
            <person name="McCombie W.R."/>
            <person name="Ouyang S."/>
            <person name="Schwartz D.C."/>
            <person name="Tanaka T."/>
            <person name="Wu J."/>
            <person name="Zhou S."/>
            <person name="Childs K.L."/>
            <person name="Davidson R.M."/>
            <person name="Lin H."/>
            <person name="Quesada-Ocampo L."/>
            <person name="Vaillancourt B."/>
            <person name="Sakai H."/>
            <person name="Lee S.S."/>
            <person name="Kim J."/>
            <person name="Numa H."/>
            <person name="Itoh T."/>
            <person name="Buell C.R."/>
            <person name="Matsumoto T."/>
        </authorList>
    </citation>
    <scope>GENOME REANNOTATION</scope>
    <source>
        <strain>cv. Nipponbare</strain>
    </source>
</reference>
<reference key="5">
    <citation type="journal article" date="2003" name="Science">
        <title>Collection, mapping, and annotation of over 28,000 cDNA clones from japonica rice.</title>
        <authorList>
            <consortium name="The rice full-length cDNA consortium"/>
        </authorList>
    </citation>
    <scope>NUCLEOTIDE SEQUENCE [LARGE SCALE MRNA]</scope>
    <source>
        <strain>cv. Nipponbare</strain>
    </source>
</reference>
<reference key="6">
    <citation type="journal article" date="2002" name="Plant Physiol.">
        <title>Expression of alpha-expansin and expansin-like genes in deepwater rice.</title>
        <authorList>
            <person name="Lee Y."/>
            <person name="Kende H."/>
        </authorList>
    </citation>
    <scope>DEVELOPMENTAL STAGE</scope>
</reference>
<reference key="7">
    <citation type="journal article" date="2004" name="Plant Mol. Biol.">
        <title>Nomenclature for members of the expansin superfamily of genes and proteins.</title>
        <authorList>
            <person name="Kende H."/>
            <person name="Bradford K.J."/>
            <person name="Brummell D.A."/>
            <person name="Cho H.-T."/>
            <person name="Cosgrove D.J."/>
            <person name="Fleming A.J."/>
            <person name="Gehring C."/>
            <person name="Lee Y."/>
            <person name="McQueen-Mason S.J."/>
            <person name="Rose J.K.C."/>
            <person name="Voesenek L.A.C."/>
        </authorList>
    </citation>
    <scope>NOMENCLATURE</scope>
</reference>
<feature type="signal peptide" evidence="2">
    <location>
        <begin position="1"/>
        <end position="27"/>
    </location>
</feature>
<feature type="chain" id="PRO_0000252022" description="Expansin-B11">
    <location>
        <begin position="28"/>
        <end position="292"/>
    </location>
</feature>
<feature type="domain" description="Expansin-like EG45" evidence="4">
    <location>
        <begin position="82"/>
        <end position="192"/>
    </location>
</feature>
<feature type="domain" description="Expansin-like CBD" evidence="3">
    <location>
        <begin position="205"/>
        <end position="287"/>
    </location>
</feature>
<feature type="glycosylation site" description="N-linked (GlcNAc...) asparagine" evidence="2">
    <location>
        <position position="51"/>
    </location>
</feature>
<feature type="disulfide bond" evidence="4">
    <location>
        <begin position="85"/>
        <end position="114"/>
    </location>
</feature>
<feature type="disulfide bond" evidence="4">
    <location>
        <begin position="117"/>
        <end position="187"/>
    </location>
</feature>
<feature type="disulfide bond" evidence="4">
    <location>
        <begin position="122"/>
        <end position="128"/>
    </location>
</feature>
<evidence type="ECO:0000250" key="1"/>
<evidence type="ECO:0000255" key="2"/>
<evidence type="ECO:0000255" key="3">
    <source>
        <dbReference type="PROSITE-ProRule" id="PRU00078"/>
    </source>
</evidence>
<evidence type="ECO:0000255" key="4">
    <source>
        <dbReference type="PROSITE-ProRule" id="PRU00079"/>
    </source>
</evidence>
<evidence type="ECO:0000269" key="5">
    <source>
    </source>
</evidence>
<evidence type="ECO:0000269" key="6">
    <source>
    </source>
</evidence>
<evidence type="ECO:0000305" key="7"/>
<dbReference type="EMBL" id="AF391103">
    <property type="protein sequence ID" value="AAL24473.1"/>
    <property type="molecule type" value="Genomic_DNA"/>
</dbReference>
<dbReference type="EMBL" id="AY046927">
    <property type="protein sequence ID" value="AAL04420.1"/>
    <property type="molecule type" value="mRNA"/>
</dbReference>
<dbReference type="EMBL" id="AP005072">
    <property type="protein sequence ID" value="BAD25736.1"/>
    <property type="molecule type" value="Genomic_DNA"/>
</dbReference>
<dbReference type="EMBL" id="AP005289">
    <property type="protein sequence ID" value="BAD25773.1"/>
    <property type="molecule type" value="Genomic_DNA"/>
</dbReference>
<dbReference type="EMBL" id="AP008208">
    <property type="protein sequence ID" value="BAF09552.1"/>
    <property type="molecule type" value="Genomic_DNA"/>
</dbReference>
<dbReference type="EMBL" id="AP014958">
    <property type="protein sequence ID" value="BAS80126.1"/>
    <property type="molecule type" value="Genomic_DNA"/>
</dbReference>
<dbReference type="EMBL" id="AK059638">
    <property type="protein sequence ID" value="BAG87061.1"/>
    <property type="molecule type" value="mRNA"/>
</dbReference>
<dbReference type="RefSeq" id="XP_015623786.1">
    <property type="nucleotide sequence ID" value="XM_015768300.1"/>
</dbReference>
<dbReference type="SMR" id="Q6H676"/>
<dbReference type="FunCoup" id="Q6H676">
    <property type="interactions" value="14"/>
</dbReference>
<dbReference type="STRING" id="39947.Q6H676"/>
<dbReference type="GlyCosmos" id="Q6H676">
    <property type="glycosylation" value="1 site, No reported glycans"/>
</dbReference>
<dbReference type="PaxDb" id="39947-Q6H676"/>
<dbReference type="EnsemblPlants" id="Os02t0658800-01">
    <property type="protein sequence ID" value="Os02t0658800-01"/>
    <property type="gene ID" value="Os02g0658800"/>
</dbReference>
<dbReference type="Gramene" id="Os02t0658800-01">
    <property type="protein sequence ID" value="Os02t0658800-01"/>
    <property type="gene ID" value="Os02g0658800"/>
</dbReference>
<dbReference type="KEGG" id="dosa:Os02g0658800"/>
<dbReference type="eggNOG" id="ENOG502S9SU">
    <property type="taxonomic scope" value="Eukaryota"/>
</dbReference>
<dbReference type="HOGENOM" id="CLU_027462_1_2_1"/>
<dbReference type="InParanoid" id="Q6H676"/>
<dbReference type="OMA" id="GATNFWF"/>
<dbReference type="OrthoDB" id="406505at2759"/>
<dbReference type="Proteomes" id="UP000000763">
    <property type="component" value="Chromosome 2"/>
</dbReference>
<dbReference type="Proteomes" id="UP000059680">
    <property type="component" value="Chromosome 2"/>
</dbReference>
<dbReference type="GO" id="GO:0005576">
    <property type="term" value="C:extracellular region"/>
    <property type="evidence" value="ECO:0007669"/>
    <property type="project" value="UniProtKB-KW"/>
</dbReference>
<dbReference type="GO" id="GO:0016020">
    <property type="term" value="C:membrane"/>
    <property type="evidence" value="ECO:0007669"/>
    <property type="project" value="UniProtKB-SubCell"/>
</dbReference>
<dbReference type="GO" id="GO:0009828">
    <property type="term" value="P:plant-type cell wall loosening"/>
    <property type="evidence" value="ECO:0000250"/>
    <property type="project" value="UniProtKB"/>
</dbReference>
<dbReference type="GO" id="GO:0019953">
    <property type="term" value="P:sexual reproduction"/>
    <property type="evidence" value="ECO:0007669"/>
    <property type="project" value="InterPro"/>
</dbReference>
<dbReference type="CDD" id="cd22275">
    <property type="entry name" value="DPBB_EXPB_N"/>
    <property type="match status" value="1"/>
</dbReference>
<dbReference type="Gene3D" id="2.60.40.760">
    <property type="entry name" value="Expansin, cellulose-binding-like domain"/>
    <property type="match status" value="1"/>
</dbReference>
<dbReference type="Gene3D" id="2.40.40.10">
    <property type="entry name" value="RlpA-like domain"/>
    <property type="match status" value="1"/>
</dbReference>
<dbReference type="InterPro" id="IPR007118">
    <property type="entry name" value="Expan_Lol_pI"/>
</dbReference>
<dbReference type="InterPro" id="IPR007112">
    <property type="entry name" value="Expansin/allergen_DPBB_dom"/>
</dbReference>
<dbReference type="InterPro" id="IPR007117">
    <property type="entry name" value="Expansin_CBD"/>
</dbReference>
<dbReference type="InterPro" id="IPR036749">
    <property type="entry name" value="Expansin_CBD_sf"/>
</dbReference>
<dbReference type="InterPro" id="IPR005795">
    <property type="entry name" value="LolPI"/>
</dbReference>
<dbReference type="InterPro" id="IPR009009">
    <property type="entry name" value="RlpA-like_DPBB"/>
</dbReference>
<dbReference type="InterPro" id="IPR036908">
    <property type="entry name" value="RlpA-like_sf"/>
</dbReference>
<dbReference type="PANTHER" id="PTHR31692:SF50">
    <property type="entry name" value="EXPANSIN-B11"/>
    <property type="match status" value="1"/>
</dbReference>
<dbReference type="PANTHER" id="PTHR31692">
    <property type="entry name" value="EXPANSIN-B3"/>
    <property type="match status" value="1"/>
</dbReference>
<dbReference type="Pfam" id="PF03330">
    <property type="entry name" value="DPBB_1"/>
    <property type="match status" value="1"/>
</dbReference>
<dbReference type="Pfam" id="PF01357">
    <property type="entry name" value="Expansin_C"/>
    <property type="match status" value="1"/>
</dbReference>
<dbReference type="PRINTS" id="PR01225">
    <property type="entry name" value="EXPANSNFAMLY"/>
</dbReference>
<dbReference type="PRINTS" id="PR00829">
    <property type="entry name" value="LOLP1ALLERGN"/>
</dbReference>
<dbReference type="SMART" id="SM00837">
    <property type="entry name" value="DPBB_1"/>
    <property type="match status" value="1"/>
</dbReference>
<dbReference type="SUPFAM" id="SSF50685">
    <property type="entry name" value="Barwin-like endoglucanases"/>
    <property type="match status" value="1"/>
</dbReference>
<dbReference type="SUPFAM" id="SSF49590">
    <property type="entry name" value="PHL pollen allergen"/>
    <property type="match status" value="1"/>
</dbReference>
<dbReference type="PROSITE" id="PS50843">
    <property type="entry name" value="EXPANSIN_CBD"/>
    <property type="match status" value="1"/>
</dbReference>
<dbReference type="PROSITE" id="PS50842">
    <property type="entry name" value="EXPANSIN_EG45"/>
    <property type="match status" value="1"/>
</dbReference>
<organism>
    <name type="scientific">Oryza sativa subsp. japonica</name>
    <name type="common">Rice</name>
    <dbReference type="NCBI Taxonomy" id="39947"/>
    <lineage>
        <taxon>Eukaryota</taxon>
        <taxon>Viridiplantae</taxon>
        <taxon>Streptophyta</taxon>
        <taxon>Embryophyta</taxon>
        <taxon>Tracheophyta</taxon>
        <taxon>Spermatophyta</taxon>
        <taxon>Magnoliopsida</taxon>
        <taxon>Liliopsida</taxon>
        <taxon>Poales</taxon>
        <taxon>Poaceae</taxon>
        <taxon>BOP clade</taxon>
        <taxon>Oryzoideae</taxon>
        <taxon>Oryzeae</taxon>
        <taxon>Oryzinae</taxon>
        <taxon>Oryza</taxon>
        <taxon>Oryza sativa</taxon>
    </lineage>
</organism>
<comment type="function">
    <text evidence="1">May cause loosening and extension of plant cell walls by disrupting non-covalent bonding between cellulose microfibrils and matrix glucans. No enzymatic activity has been found. May be required for rapid internodal elongation in deepwater rice during submergence (By similarity).</text>
</comment>
<comment type="subcellular location">
    <subcellularLocation>
        <location evidence="1">Secreted</location>
        <location evidence="1">Cell wall</location>
    </subcellularLocation>
    <subcellularLocation>
        <location evidence="1">Membrane</location>
        <topology evidence="1">Peripheral membrane protein</topology>
    </subcellularLocation>
</comment>
<comment type="tissue specificity">
    <text evidence="5">Expressed in internodes.</text>
</comment>
<comment type="developmental stage">
    <text evidence="6">Expressed in the growing regions of roots, coleoptiles, and internodes.</text>
</comment>
<comment type="induction">
    <text evidence="5">By gibberellin (GA3) and wounding.</text>
</comment>
<comment type="similarity">
    <text evidence="7">Belongs to the expansin family. Expansin B subfamily.</text>
</comment>
<comment type="online information" name="EXPANSIN homepage">
    <link uri="https://www.dept.psu.edu/biology/groups/expansins/index.htm"/>
</comment>
<keyword id="KW-0134">Cell wall</keyword>
<keyword id="KW-0961">Cell wall biogenesis/degradation</keyword>
<keyword id="KW-1015">Disulfide bond</keyword>
<keyword id="KW-0325">Glycoprotein</keyword>
<keyword id="KW-0472">Membrane</keyword>
<keyword id="KW-1185">Reference proteome</keyword>
<keyword id="KW-0964">Secreted</keyword>
<keyword id="KW-0732">Signal</keyword>
<accession>Q6H676</accession>
<accession>Q0DYY6</accession>
<accession>Q941I8</accession>
<accession>Q946J6</accession>
<protein>
    <recommendedName>
        <fullName>Expansin-B11</fullName>
    </recommendedName>
    <alternativeName>
        <fullName>Beta-expansin-11</fullName>
    </alternativeName>
    <alternativeName>
        <fullName>OsEXPB11</fullName>
    </alternativeName>
    <alternativeName>
        <fullName>OsaEXPb1.20</fullName>
    </alternativeName>
</protein>
<proteinExistence type="evidence at transcript level"/>
<name>EXB11_ORYSJ</name>